<name>GPMB_SHIB3</name>
<comment type="catalytic activity">
    <reaction evidence="1">
        <text>(2R)-2-phosphoglycerate = (2R)-3-phosphoglycerate</text>
        <dbReference type="Rhea" id="RHEA:15901"/>
        <dbReference type="ChEBI" id="CHEBI:58272"/>
        <dbReference type="ChEBI" id="CHEBI:58289"/>
    </reaction>
</comment>
<comment type="pathway">
    <text evidence="1">Carbohydrate degradation; glycolysis; pyruvate from D-glyceraldehyde 3-phosphate: step 3/5.</text>
</comment>
<comment type="similarity">
    <text evidence="1">Belongs to the phosphoglycerate mutase family. GpmB subfamily.</text>
</comment>
<protein>
    <recommendedName>
        <fullName evidence="1">Probable phosphoglycerate mutase GpmB</fullName>
        <ecNumber evidence="1">5.4.2.-</ecNumber>
    </recommendedName>
    <alternativeName>
        <fullName evidence="1">PGAM</fullName>
    </alternativeName>
    <alternativeName>
        <fullName evidence="1">Phosphoglyceromutase</fullName>
    </alternativeName>
</protein>
<accession>B2TZS8</accession>
<evidence type="ECO:0000255" key="1">
    <source>
        <dbReference type="HAMAP-Rule" id="MF_01040"/>
    </source>
</evidence>
<keyword id="KW-0324">Glycolysis</keyword>
<keyword id="KW-0413">Isomerase</keyword>
<keyword id="KW-1185">Reference proteome</keyword>
<reference key="1">
    <citation type="submission" date="2008-05" db="EMBL/GenBank/DDBJ databases">
        <title>Complete sequence of Shigella boydii serotype 18 strain BS512.</title>
        <authorList>
            <person name="Rasko D.A."/>
            <person name="Rosovitz M."/>
            <person name="Maurelli A.T."/>
            <person name="Myers G."/>
            <person name="Seshadri R."/>
            <person name="Cer R."/>
            <person name="Jiang L."/>
            <person name="Ravel J."/>
            <person name="Sebastian Y."/>
        </authorList>
    </citation>
    <scope>NUCLEOTIDE SEQUENCE [LARGE SCALE GENOMIC DNA]</scope>
    <source>
        <strain>CDC 3083-94 / BS512</strain>
    </source>
</reference>
<dbReference type="EC" id="5.4.2.-" evidence="1"/>
<dbReference type="EMBL" id="CP001063">
    <property type="protein sequence ID" value="ACD08644.1"/>
    <property type="molecule type" value="Genomic_DNA"/>
</dbReference>
<dbReference type="RefSeq" id="WP_000942342.1">
    <property type="nucleotide sequence ID" value="NC_010658.1"/>
</dbReference>
<dbReference type="SMR" id="B2TZS8"/>
<dbReference type="STRING" id="344609.SbBS512_E4944"/>
<dbReference type="KEGG" id="sbc:SbBS512_E4944"/>
<dbReference type="HOGENOM" id="CLU_033323_9_5_6"/>
<dbReference type="UniPathway" id="UPA00109">
    <property type="reaction ID" value="UER00186"/>
</dbReference>
<dbReference type="Proteomes" id="UP000001030">
    <property type="component" value="Chromosome"/>
</dbReference>
<dbReference type="GO" id="GO:0005737">
    <property type="term" value="C:cytoplasm"/>
    <property type="evidence" value="ECO:0007669"/>
    <property type="project" value="TreeGrafter"/>
</dbReference>
<dbReference type="GO" id="GO:0016791">
    <property type="term" value="F:phosphatase activity"/>
    <property type="evidence" value="ECO:0007669"/>
    <property type="project" value="TreeGrafter"/>
</dbReference>
<dbReference type="GO" id="GO:0004619">
    <property type="term" value="F:phosphoglycerate mutase activity"/>
    <property type="evidence" value="ECO:0007669"/>
    <property type="project" value="UniProtKB-UniRule"/>
</dbReference>
<dbReference type="GO" id="GO:0006096">
    <property type="term" value="P:glycolytic process"/>
    <property type="evidence" value="ECO:0007669"/>
    <property type="project" value="UniProtKB-UniRule"/>
</dbReference>
<dbReference type="CDD" id="cd07067">
    <property type="entry name" value="HP_PGM_like"/>
    <property type="match status" value="1"/>
</dbReference>
<dbReference type="Gene3D" id="3.40.50.1240">
    <property type="entry name" value="Phosphoglycerate mutase-like"/>
    <property type="match status" value="1"/>
</dbReference>
<dbReference type="HAMAP" id="MF_01040">
    <property type="entry name" value="PGAM_GpmB"/>
    <property type="match status" value="1"/>
</dbReference>
<dbReference type="InterPro" id="IPR013078">
    <property type="entry name" value="His_Pase_superF_clade-1"/>
</dbReference>
<dbReference type="InterPro" id="IPR029033">
    <property type="entry name" value="His_PPase_superfam"/>
</dbReference>
<dbReference type="InterPro" id="IPR001345">
    <property type="entry name" value="PG/BPGM_mutase_AS"/>
</dbReference>
<dbReference type="InterPro" id="IPR050275">
    <property type="entry name" value="PGM_Phosphatase"/>
</dbReference>
<dbReference type="InterPro" id="IPR023086">
    <property type="entry name" value="Phosphoglycerate_mutase_GpmB"/>
</dbReference>
<dbReference type="NCBIfam" id="NF002901">
    <property type="entry name" value="PRK03482.1"/>
    <property type="match status" value="1"/>
</dbReference>
<dbReference type="PANTHER" id="PTHR48100">
    <property type="entry name" value="BROAD-SPECIFICITY PHOSPHATASE YOR283W-RELATED"/>
    <property type="match status" value="1"/>
</dbReference>
<dbReference type="PANTHER" id="PTHR48100:SF1">
    <property type="entry name" value="HISTIDINE PHOSPHATASE FAMILY PROTEIN-RELATED"/>
    <property type="match status" value="1"/>
</dbReference>
<dbReference type="Pfam" id="PF00300">
    <property type="entry name" value="His_Phos_1"/>
    <property type="match status" value="1"/>
</dbReference>
<dbReference type="SMART" id="SM00855">
    <property type="entry name" value="PGAM"/>
    <property type="match status" value="1"/>
</dbReference>
<dbReference type="SUPFAM" id="SSF53254">
    <property type="entry name" value="Phosphoglycerate mutase-like"/>
    <property type="match status" value="1"/>
</dbReference>
<dbReference type="PROSITE" id="PS00175">
    <property type="entry name" value="PG_MUTASE"/>
    <property type="match status" value="1"/>
</dbReference>
<gene>
    <name evidence="1" type="primary">gpmB</name>
    <name type="ordered locus">SbBS512_E4944</name>
</gene>
<sequence>MLQVYLVRHGETQWNAERRIQGQSDSPLTAKGEQQAMQVATRAKELGITHIISSDLGRTRRTAEIIAQACGCDIIFDSRLRELNMGVLEKRHIDSLTEEEENWRRQLVNGTVDGRIPEGESMQELSDRVNAALESCRDLPQGSRPLLVSHGIALGCLVSTILGLPAWAARRLRLRNCSISRVDYQESLWLASGWVVETAGDISHLDAPALDELQR</sequence>
<feature type="chain" id="PRO_1000136019" description="Probable phosphoglycerate mutase GpmB">
    <location>
        <begin position="1"/>
        <end position="215"/>
    </location>
</feature>
<feature type="active site" description="Tele-phosphohistidine intermediate" evidence="1">
    <location>
        <position position="9"/>
    </location>
</feature>
<feature type="active site" description="Proton donor/acceptor" evidence="1">
    <location>
        <position position="82"/>
    </location>
</feature>
<feature type="binding site" evidence="1">
    <location>
        <begin position="8"/>
        <end position="15"/>
    </location>
    <ligand>
        <name>substrate</name>
    </ligand>
</feature>
<feature type="binding site" evidence="1">
    <location>
        <begin position="21"/>
        <end position="22"/>
    </location>
    <ligand>
        <name>substrate</name>
    </ligand>
</feature>
<feature type="binding site" evidence="1">
    <location>
        <position position="58"/>
    </location>
    <ligand>
        <name>substrate</name>
    </ligand>
</feature>
<feature type="binding site" evidence="1">
    <location>
        <position position="60"/>
    </location>
    <ligand>
        <name>substrate</name>
    </ligand>
</feature>
<feature type="binding site" evidence="1">
    <location>
        <begin position="82"/>
        <end position="85"/>
    </location>
    <ligand>
        <name>substrate</name>
    </ligand>
</feature>
<feature type="binding site" evidence="1">
    <location>
        <begin position="104"/>
        <end position="105"/>
    </location>
    <ligand>
        <name>substrate</name>
    </ligand>
</feature>
<feature type="binding site" evidence="1">
    <location>
        <begin position="151"/>
        <end position="152"/>
    </location>
    <ligand>
        <name>substrate</name>
    </ligand>
</feature>
<feature type="site" description="Transition state stabilizer" evidence="1">
    <location>
        <position position="150"/>
    </location>
</feature>
<proteinExistence type="inferred from homology"/>
<organism>
    <name type="scientific">Shigella boydii serotype 18 (strain CDC 3083-94 / BS512)</name>
    <dbReference type="NCBI Taxonomy" id="344609"/>
    <lineage>
        <taxon>Bacteria</taxon>
        <taxon>Pseudomonadati</taxon>
        <taxon>Pseudomonadota</taxon>
        <taxon>Gammaproteobacteria</taxon>
        <taxon>Enterobacterales</taxon>
        <taxon>Enterobacteriaceae</taxon>
        <taxon>Shigella</taxon>
    </lineage>
</organism>